<feature type="chain" id="PRO_0000161896" description="23S rRNA (uracil(1939)-C(5))-methyltransferase RlmD">
    <location>
        <begin position="1"/>
        <end position="450"/>
    </location>
</feature>
<feature type="domain" description="TRAM" evidence="1">
    <location>
        <begin position="15"/>
        <end position="73"/>
    </location>
</feature>
<feature type="active site" description="Nucleophile" evidence="1">
    <location>
        <position position="400"/>
    </location>
</feature>
<feature type="binding site" evidence="1">
    <location>
        <position position="86"/>
    </location>
    <ligand>
        <name>[4Fe-4S] cluster</name>
        <dbReference type="ChEBI" id="CHEBI:49883"/>
    </ligand>
</feature>
<feature type="binding site" evidence="1">
    <location>
        <position position="92"/>
    </location>
    <ligand>
        <name>[4Fe-4S] cluster</name>
        <dbReference type="ChEBI" id="CHEBI:49883"/>
    </ligand>
</feature>
<feature type="binding site" evidence="1">
    <location>
        <position position="95"/>
    </location>
    <ligand>
        <name>[4Fe-4S] cluster</name>
        <dbReference type="ChEBI" id="CHEBI:49883"/>
    </ligand>
</feature>
<feature type="binding site" evidence="1">
    <location>
        <position position="173"/>
    </location>
    <ligand>
        <name>[4Fe-4S] cluster</name>
        <dbReference type="ChEBI" id="CHEBI:49883"/>
    </ligand>
</feature>
<feature type="binding site" evidence="1">
    <location>
        <position position="276"/>
    </location>
    <ligand>
        <name>S-adenosyl-L-methionine</name>
        <dbReference type="ChEBI" id="CHEBI:59789"/>
    </ligand>
</feature>
<feature type="binding site" evidence="1">
    <location>
        <position position="305"/>
    </location>
    <ligand>
        <name>S-adenosyl-L-methionine</name>
        <dbReference type="ChEBI" id="CHEBI:59789"/>
    </ligand>
</feature>
<feature type="binding site" evidence="1">
    <location>
        <position position="310"/>
    </location>
    <ligand>
        <name>S-adenosyl-L-methionine</name>
        <dbReference type="ChEBI" id="CHEBI:59789"/>
    </ligand>
</feature>
<feature type="binding site" evidence="1">
    <location>
        <position position="326"/>
    </location>
    <ligand>
        <name>S-adenosyl-L-methionine</name>
        <dbReference type="ChEBI" id="CHEBI:59789"/>
    </ligand>
</feature>
<feature type="binding site" evidence="1">
    <location>
        <position position="353"/>
    </location>
    <ligand>
        <name>S-adenosyl-L-methionine</name>
        <dbReference type="ChEBI" id="CHEBI:59789"/>
    </ligand>
</feature>
<feature type="binding site" evidence="1">
    <location>
        <position position="374"/>
    </location>
    <ligand>
        <name>S-adenosyl-L-methionine</name>
        <dbReference type="ChEBI" id="CHEBI:59789"/>
    </ligand>
</feature>
<dbReference type="EC" id="2.1.1.190" evidence="1"/>
<dbReference type="EMBL" id="BX950851">
    <property type="protein sequence ID" value="CAG76468.1"/>
    <property type="molecule type" value="Genomic_DNA"/>
</dbReference>
<dbReference type="RefSeq" id="WP_011095073.1">
    <property type="nucleotide sequence ID" value="NC_004547.2"/>
</dbReference>
<dbReference type="SMR" id="Q6D178"/>
<dbReference type="STRING" id="218491.ECA3570"/>
<dbReference type="KEGG" id="eca:ECA3570"/>
<dbReference type="PATRIC" id="fig|218491.5.peg.3619"/>
<dbReference type="eggNOG" id="COG2265">
    <property type="taxonomic scope" value="Bacteria"/>
</dbReference>
<dbReference type="HOGENOM" id="CLU_014689_8_2_6"/>
<dbReference type="OrthoDB" id="9804590at2"/>
<dbReference type="Proteomes" id="UP000007966">
    <property type="component" value="Chromosome"/>
</dbReference>
<dbReference type="GO" id="GO:0051539">
    <property type="term" value="F:4 iron, 4 sulfur cluster binding"/>
    <property type="evidence" value="ECO:0007669"/>
    <property type="project" value="UniProtKB-KW"/>
</dbReference>
<dbReference type="GO" id="GO:0005506">
    <property type="term" value="F:iron ion binding"/>
    <property type="evidence" value="ECO:0007669"/>
    <property type="project" value="UniProtKB-UniRule"/>
</dbReference>
<dbReference type="GO" id="GO:0003723">
    <property type="term" value="F:RNA binding"/>
    <property type="evidence" value="ECO:0007669"/>
    <property type="project" value="InterPro"/>
</dbReference>
<dbReference type="GO" id="GO:0070041">
    <property type="term" value="F:rRNA (uridine-C5-)-methyltransferase activity"/>
    <property type="evidence" value="ECO:0007669"/>
    <property type="project" value="UniProtKB-UniRule"/>
</dbReference>
<dbReference type="GO" id="GO:0070475">
    <property type="term" value="P:rRNA base methylation"/>
    <property type="evidence" value="ECO:0007669"/>
    <property type="project" value="TreeGrafter"/>
</dbReference>
<dbReference type="CDD" id="cd02440">
    <property type="entry name" value="AdoMet_MTases"/>
    <property type="match status" value="1"/>
</dbReference>
<dbReference type="FunFam" id="3.40.50.150:FF:000009">
    <property type="entry name" value="23S rRNA (Uracil(1939)-C(5))-methyltransferase RlmD"/>
    <property type="match status" value="1"/>
</dbReference>
<dbReference type="FunFam" id="2.40.50.140:FF:000097">
    <property type="entry name" value="23S rRNA (uracil(1939)-C(5))-methyltransferase RlmD"/>
    <property type="match status" value="1"/>
</dbReference>
<dbReference type="Gene3D" id="2.40.50.1070">
    <property type="match status" value="1"/>
</dbReference>
<dbReference type="Gene3D" id="2.40.50.140">
    <property type="entry name" value="Nucleic acid-binding proteins"/>
    <property type="match status" value="1"/>
</dbReference>
<dbReference type="Gene3D" id="3.40.50.150">
    <property type="entry name" value="Vaccinia Virus protein VP39"/>
    <property type="match status" value="1"/>
</dbReference>
<dbReference type="HAMAP" id="MF_01010">
    <property type="entry name" value="23SrRNA_methyltr_RlmD"/>
    <property type="match status" value="1"/>
</dbReference>
<dbReference type="InterPro" id="IPR001566">
    <property type="entry name" value="23S_rRNA_MeTrfase_RlmD"/>
</dbReference>
<dbReference type="InterPro" id="IPR030390">
    <property type="entry name" value="MeTrfase_TrmA_AS"/>
</dbReference>
<dbReference type="InterPro" id="IPR030391">
    <property type="entry name" value="MeTrfase_TrmA_CS"/>
</dbReference>
<dbReference type="InterPro" id="IPR012340">
    <property type="entry name" value="NA-bd_OB-fold"/>
</dbReference>
<dbReference type="InterPro" id="IPR029063">
    <property type="entry name" value="SAM-dependent_MTases_sf"/>
</dbReference>
<dbReference type="InterPro" id="IPR002792">
    <property type="entry name" value="TRAM_dom"/>
</dbReference>
<dbReference type="InterPro" id="IPR010280">
    <property type="entry name" value="U5_MeTrfase_fam"/>
</dbReference>
<dbReference type="NCBIfam" id="NF009639">
    <property type="entry name" value="PRK13168.1"/>
    <property type="match status" value="1"/>
</dbReference>
<dbReference type="NCBIfam" id="TIGR00479">
    <property type="entry name" value="rumA"/>
    <property type="match status" value="1"/>
</dbReference>
<dbReference type="PANTHER" id="PTHR11061:SF49">
    <property type="entry name" value="23S RRNA (URACIL(1939)-C(5))-METHYLTRANSFERASE RLMD"/>
    <property type="match status" value="1"/>
</dbReference>
<dbReference type="PANTHER" id="PTHR11061">
    <property type="entry name" value="RNA M5U METHYLTRANSFERASE"/>
    <property type="match status" value="1"/>
</dbReference>
<dbReference type="Pfam" id="PF01938">
    <property type="entry name" value="TRAM"/>
    <property type="match status" value="1"/>
</dbReference>
<dbReference type="Pfam" id="PF05958">
    <property type="entry name" value="tRNA_U5-meth_tr"/>
    <property type="match status" value="1"/>
</dbReference>
<dbReference type="SUPFAM" id="SSF50249">
    <property type="entry name" value="Nucleic acid-binding proteins"/>
    <property type="match status" value="1"/>
</dbReference>
<dbReference type="SUPFAM" id="SSF53335">
    <property type="entry name" value="S-adenosyl-L-methionine-dependent methyltransferases"/>
    <property type="match status" value="1"/>
</dbReference>
<dbReference type="PROSITE" id="PS51687">
    <property type="entry name" value="SAM_MT_RNA_M5U"/>
    <property type="match status" value="1"/>
</dbReference>
<dbReference type="PROSITE" id="PS50926">
    <property type="entry name" value="TRAM"/>
    <property type="match status" value="1"/>
</dbReference>
<dbReference type="PROSITE" id="PS01230">
    <property type="entry name" value="TRMA_1"/>
    <property type="match status" value="1"/>
</dbReference>
<dbReference type="PROSITE" id="PS01231">
    <property type="entry name" value="TRMA_2"/>
    <property type="match status" value="1"/>
</dbReference>
<keyword id="KW-0004">4Fe-4S</keyword>
<keyword id="KW-0408">Iron</keyword>
<keyword id="KW-0411">Iron-sulfur</keyword>
<keyword id="KW-0479">Metal-binding</keyword>
<keyword id="KW-0489">Methyltransferase</keyword>
<keyword id="KW-1185">Reference proteome</keyword>
<keyword id="KW-0698">rRNA processing</keyword>
<keyword id="KW-0949">S-adenosyl-L-methionine</keyword>
<keyword id="KW-0808">Transferase</keyword>
<evidence type="ECO:0000255" key="1">
    <source>
        <dbReference type="HAMAP-Rule" id="MF_01010"/>
    </source>
</evidence>
<accession>Q6D178</accession>
<gene>
    <name evidence="1" type="primary">rlmD</name>
    <name type="synonym">rumA</name>
    <name type="ordered locus">ECA3570</name>
</gene>
<comment type="function">
    <text evidence="1">Catalyzes the formation of 5-methyl-uridine at position 1939 (m5U1939) in 23S rRNA.</text>
</comment>
<comment type="catalytic activity">
    <reaction evidence="1">
        <text>uridine(1939) in 23S rRNA + S-adenosyl-L-methionine = 5-methyluridine(1939) in 23S rRNA + S-adenosyl-L-homocysteine + H(+)</text>
        <dbReference type="Rhea" id="RHEA:42908"/>
        <dbReference type="Rhea" id="RHEA-COMP:10278"/>
        <dbReference type="Rhea" id="RHEA-COMP:10279"/>
        <dbReference type="ChEBI" id="CHEBI:15378"/>
        <dbReference type="ChEBI" id="CHEBI:57856"/>
        <dbReference type="ChEBI" id="CHEBI:59789"/>
        <dbReference type="ChEBI" id="CHEBI:65315"/>
        <dbReference type="ChEBI" id="CHEBI:74447"/>
        <dbReference type="EC" id="2.1.1.190"/>
    </reaction>
</comment>
<comment type="similarity">
    <text evidence="1">Belongs to the class I-like SAM-binding methyltransferase superfamily. RNA M5U methyltransferase family. RlmD subfamily.</text>
</comment>
<name>RLMD_PECAS</name>
<sequence length="450" mass="49726">MAQFYSPNRRVTTRKAVPAKNLTVTVASLDPFGQGVARHEGKTVFVTGVLPGEQAEVQLTEEKRQFSHAKLKRLLTPSPQRVEPPCPHFTRCGGCQQQHAEITLQQSSKTAALMRMMTRETGIELSAASLIAGTPYAYRRRARLALYFQAKEQRLLMGYRQSNSHDLVDIKACPVLRPELEALLQPLRDCLSQLSAVKRLGHVELVQAENGPLLVLRHLDPLHPADEQALRDFAQRQGVSVYLAPDAESLTCLHGEEPVYHVAGLTLAFSPRDFIQVNDAVNQQMVAQALAWLDVQSQDRILDLFCGMGNFTLPLAQRAASVVGVEGVTALVEKGRENARRNALSNVTFFHQNLEDDVTQQPWAAQGFDKILLDPARAGAAGVMEQITRLAPKRVVYVSCNATTLARDSKVLLAAGYRLANVAMLDMFPHTGHLESMALFLHDTGMRKAQ</sequence>
<organism>
    <name type="scientific">Pectobacterium atrosepticum (strain SCRI 1043 / ATCC BAA-672)</name>
    <name type="common">Erwinia carotovora subsp. atroseptica</name>
    <dbReference type="NCBI Taxonomy" id="218491"/>
    <lineage>
        <taxon>Bacteria</taxon>
        <taxon>Pseudomonadati</taxon>
        <taxon>Pseudomonadota</taxon>
        <taxon>Gammaproteobacteria</taxon>
        <taxon>Enterobacterales</taxon>
        <taxon>Pectobacteriaceae</taxon>
        <taxon>Pectobacterium</taxon>
    </lineage>
</organism>
<reference key="1">
    <citation type="journal article" date="2004" name="Proc. Natl. Acad. Sci. U.S.A.">
        <title>Genome sequence of the enterobacterial phytopathogen Erwinia carotovora subsp. atroseptica and characterization of virulence factors.</title>
        <authorList>
            <person name="Bell K.S."/>
            <person name="Sebaihia M."/>
            <person name="Pritchard L."/>
            <person name="Holden M.T.G."/>
            <person name="Hyman L.J."/>
            <person name="Holeva M.C."/>
            <person name="Thomson N.R."/>
            <person name="Bentley S.D."/>
            <person name="Churcher L.J.C."/>
            <person name="Mungall K."/>
            <person name="Atkin R."/>
            <person name="Bason N."/>
            <person name="Brooks K."/>
            <person name="Chillingworth T."/>
            <person name="Clark K."/>
            <person name="Doggett J."/>
            <person name="Fraser A."/>
            <person name="Hance Z."/>
            <person name="Hauser H."/>
            <person name="Jagels K."/>
            <person name="Moule S."/>
            <person name="Norbertczak H."/>
            <person name="Ormond D."/>
            <person name="Price C."/>
            <person name="Quail M.A."/>
            <person name="Sanders M."/>
            <person name="Walker D."/>
            <person name="Whitehead S."/>
            <person name="Salmond G.P.C."/>
            <person name="Birch P.R.J."/>
            <person name="Parkhill J."/>
            <person name="Toth I.K."/>
        </authorList>
    </citation>
    <scope>NUCLEOTIDE SEQUENCE [LARGE SCALE GENOMIC DNA]</scope>
    <source>
        <strain>SCRI 1043 / ATCC BAA-672</strain>
    </source>
</reference>
<protein>
    <recommendedName>
        <fullName evidence="1">23S rRNA (uracil(1939)-C(5))-methyltransferase RlmD</fullName>
        <ecNumber evidence="1">2.1.1.190</ecNumber>
    </recommendedName>
    <alternativeName>
        <fullName evidence="1">23S rRNA(m5U1939)-methyltransferase</fullName>
    </alternativeName>
</protein>
<proteinExistence type="inferred from homology"/>